<comment type="subunit">
    <text evidence="3">Found in a complex with CDC20, CDC27 and TUBG1. Interacts with CDC20.</text>
</comment>
<comment type="subcellular location">
    <subcellularLocation>
        <location evidence="3">Cytoplasm</location>
    </subcellularLocation>
    <subcellularLocation>
        <location evidence="3 4">Cytoplasm</location>
        <location evidence="3 4">Cytoskeleton</location>
        <location evidence="3 4">Microtubule organizing center</location>
        <location evidence="3 4">Centrosome</location>
    </subcellularLocation>
    <text evidence="4">Colocalizes with the centrosomal pericentrin protein PCNT1. Located in the connecting piece of sperm.</text>
</comment>
<comment type="alternative products">
    <event type="alternative splicing"/>
    <isoform>
        <id>Q148B6-1</id>
        <name>1</name>
        <sequence type="displayed"/>
    </isoform>
    <isoform>
        <id>Q148B6-2</id>
        <name>2</name>
        <sequence type="described" ref="VSP_029818"/>
    </isoform>
</comment>
<comment type="tissue specificity">
    <text evidence="3 4">Expressed in testis. Expressed in pachyten spermatocytes, spermatids and epididymal sperm (at protein level).</text>
</comment>
<comment type="similarity">
    <text evidence="6">Belongs to the speriolin family.</text>
</comment>
<evidence type="ECO:0000255" key="1"/>
<evidence type="ECO:0000256" key="2">
    <source>
        <dbReference type="SAM" id="MobiDB-lite"/>
    </source>
</evidence>
<evidence type="ECO:0000269" key="3">
    <source>
    </source>
</evidence>
<evidence type="ECO:0000269" key="4">
    <source>
    </source>
</evidence>
<evidence type="ECO:0000303" key="5">
    <source>
    </source>
</evidence>
<evidence type="ECO:0000305" key="6"/>
<gene>
    <name type="primary">Spatc1</name>
    <name type="synonym">Sprn</name>
</gene>
<organism>
    <name type="scientific">Mus musculus</name>
    <name type="common">Mouse</name>
    <dbReference type="NCBI Taxonomy" id="10090"/>
    <lineage>
        <taxon>Eukaryota</taxon>
        <taxon>Metazoa</taxon>
        <taxon>Chordata</taxon>
        <taxon>Craniata</taxon>
        <taxon>Vertebrata</taxon>
        <taxon>Euteleostomi</taxon>
        <taxon>Mammalia</taxon>
        <taxon>Eutheria</taxon>
        <taxon>Euarchontoglires</taxon>
        <taxon>Glires</taxon>
        <taxon>Rodentia</taxon>
        <taxon>Myomorpha</taxon>
        <taxon>Muroidea</taxon>
        <taxon>Muridae</taxon>
        <taxon>Murinae</taxon>
        <taxon>Mus</taxon>
        <taxon>Mus</taxon>
    </lineage>
</organism>
<reference key="1">
    <citation type="journal article" date="2004" name="J. Biol. Chem.">
        <title>Speriolin is a novel spermatogenic cell-specific centrosomal protein associated with the seventh WD motif of Cdc20.</title>
        <authorList>
            <person name="Goto M."/>
            <person name="Eddy E.M."/>
        </authorList>
    </citation>
    <scope>NUCLEOTIDE SEQUENCE [MRNA] (ISOFORM 1)</scope>
    <scope>INTERACTION WITH CDC20</scope>
    <scope>IDENTIFICATION IN A COMPLEX WITH CDC20; CDC27 AND TUBG1</scope>
    <scope>MUTAGENESIS OF LYS-302; VAL-305; ARG-314 AND LEU-469</scope>
    <scope>SUBCELLULAR LOCATION</scope>
    <scope>DEVELOPMENTAL STAGE</scope>
    <scope>TISSUE SPECIFICITY</scope>
    <source>
        <tissue>Testis</tissue>
    </source>
</reference>
<reference key="2">
    <citation type="journal article" date="2005" name="Science">
        <title>The transcriptional landscape of the mammalian genome.</title>
        <authorList>
            <person name="Carninci P."/>
            <person name="Kasukawa T."/>
            <person name="Katayama S."/>
            <person name="Gough J."/>
            <person name="Frith M.C."/>
            <person name="Maeda N."/>
            <person name="Oyama R."/>
            <person name="Ravasi T."/>
            <person name="Lenhard B."/>
            <person name="Wells C."/>
            <person name="Kodzius R."/>
            <person name="Shimokawa K."/>
            <person name="Bajic V.B."/>
            <person name="Brenner S.E."/>
            <person name="Batalov S."/>
            <person name="Forrest A.R."/>
            <person name="Zavolan M."/>
            <person name="Davis M.J."/>
            <person name="Wilming L.G."/>
            <person name="Aidinis V."/>
            <person name="Allen J.E."/>
            <person name="Ambesi-Impiombato A."/>
            <person name="Apweiler R."/>
            <person name="Aturaliya R.N."/>
            <person name="Bailey T.L."/>
            <person name="Bansal M."/>
            <person name="Baxter L."/>
            <person name="Beisel K.W."/>
            <person name="Bersano T."/>
            <person name="Bono H."/>
            <person name="Chalk A.M."/>
            <person name="Chiu K.P."/>
            <person name="Choudhary V."/>
            <person name="Christoffels A."/>
            <person name="Clutterbuck D.R."/>
            <person name="Crowe M.L."/>
            <person name="Dalla E."/>
            <person name="Dalrymple B.P."/>
            <person name="de Bono B."/>
            <person name="Della Gatta G."/>
            <person name="di Bernardo D."/>
            <person name="Down T."/>
            <person name="Engstrom P."/>
            <person name="Fagiolini M."/>
            <person name="Faulkner G."/>
            <person name="Fletcher C.F."/>
            <person name="Fukushima T."/>
            <person name="Furuno M."/>
            <person name="Futaki S."/>
            <person name="Gariboldi M."/>
            <person name="Georgii-Hemming P."/>
            <person name="Gingeras T.R."/>
            <person name="Gojobori T."/>
            <person name="Green R.E."/>
            <person name="Gustincich S."/>
            <person name="Harbers M."/>
            <person name="Hayashi Y."/>
            <person name="Hensch T.K."/>
            <person name="Hirokawa N."/>
            <person name="Hill D."/>
            <person name="Huminiecki L."/>
            <person name="Iacono M."/>
            <person name="Ikeo K."/>
            <person name="Iwama A."/>
            <person name="Ishikawa T."/>
            <person name="Jakt M."/>
            <person name="Kanapin A."/>
            <person name="Katoh M."/>
            <person name="Kawasawa Y."/>
            <person name="Kelso J."/>
            <person name="Kitamura H."/>
            <person name="Kitano H."/>
            <person name="Kollias G."/>
            <person name="Krishnan S.P."/>
            <person name="Kruger A."/>
            <person name="Kummerfeld S.K."/>
            <person name="Kurochkin I.V."/>
            <person name="Lareau L.F."/>
            <person name="Lazarevic D."/>
            <person name="Lipovich L."/>
            <person name="Liu J."/>
            <person name="Liuni S."/>
            <person name="McWilliam S."/>
            <person name="Madan Babu M."/>
            <person name="Madera M."/>
            <person name="Marchionni L."/>
            <person name="Matsuda H."/>
            <person name="Matsuzawa S."/>
            <person name="Miki H."/>
            <person name="Mignone F."/>
            <person name="Miyake S."/>
            <person name="Morris K."/>
            <person name="Mottagui-Tabar S."/>
            <person name="Mulder N."/>
            <person name="Nakano N."/>
            <person name="Nakauchi H."/>
            <person name="Ng P."/>
            <person name="Nilsson R."/>
            <person name="Nishiguchi S."/>
            <person name="Nishikawa S."/>
            <person name="Nori F."/>
            <person name="Ohara O."/>
            <person name="Okazaki Y."/>
            <person name="Orlando V."/>
            <person name="Pang K.C."/>
            <person name="Pavan W.J."/>
            <person name="Pavesi G."/>
            <person name="Pesole G."/>
            <person name="Petrovsky N."/>
            <person name="Piazza S."/>
            <person name="Reed J."/>
            <person name="Reid J.F."/>
            <person name="Ring B.Z."/>
            <person name="Ringwald M."/>
            <person name="Rost B."/>
            <person name="Ruan Y."/>
            <person name="Salzberg S.L."/>
            <person name="Sandelin A."/>
            <person name="Schneider C."/>
            <person name="Schoenbach C."/>
            <person name="Sekiguchi K."/>
            <person name="Semple C.A."/>
            <person name="Seno S."/>
            <person name="Sessa L."/>
            <person name="Sheng Y."/>
            <person name="Shibata Y."/>
            <person name="Shimada H."/>
            <person name="Shimada K."/>
            <person name="Silva D."/>
            <person name="Sinclair B."/>
            <person name="Sperling S."/>
            <person name="Stupka E."/>
            <person name="Sugiura K."/>
            <person name="Sultana R."/>
            <person name="Takenaka Y."/>
            <person name="Taki K."/>
            <person name="Tammoja K."/>
            <person name="Tan S.L."/>
            <person name="Tang S."/>
            <person name="Taylor M.S."/>
            <person name="Tegner J."/>
            <person name="Teichmann S.A."/>
            <person name="Ueda H.R."/>
            <person name="van Nimwegen E."/>
            <person name="Verardo R."/>
            <person name="Wei C.L."/>
            <person name="Yagi K."/>
            <person name="Yamanishi H."/>
            <person name="Zabarovsky E."/>
            <person name="Zhu S."/>
            <person name="Zimmer A."/>
            <person name="Hide W."/>
            <person name="Bult C."/>
            <person name="Grimmond S.M."/>
            <person name="Teasdale R.D."/>
            <person name="Liu E.T."/>
            <person name="Brusic V."/>
            <person name="Quackenbush J."/>
            <person name="Wahlestedt C."/>
            <person name="Mattick J.S."/>
            <person name="Hume D.A."/>
            <person name="Kai C."/>
            <person name="Sasaki D."/>
            <person name="Tomaru Y."/>
            <person name="Fukuda S."/>
            <person name="Kanamori-Katayama M."/>
            <person name="Suzuki M."/>
            <person name="Aoki J."/>
            <person name="Arakawa T."/>
            <person name="Iida J."/>
            <person name="Imamura K."/>
            <person name="Itoh M."/>
            <person name="Kato T."/>
            <person name="Kawaji H."/>
            <person name="Kawagashira N."/>
            <person name="Kawashima T."/>
            <person name="Kojima M."/>
            <person name="Kondo S."/>
            <person name="Konno H."/>
            <person name="Nakano K."/>
            <person name="Ninomiya N."/>
            <person name="Nishio T."/>
            <person name="Okada M."/>
            <person name="Plessy C."/>
            <person name="Shibata K."/>
            <person name="Shiraki T."/>
            <person name="Suzuki S."/>
            <person name="Tagami M."/>
            <person name="Waki K."/>
            <person name="Watahiki A."/>
            <person name="Okamura-Oho Y."/>
            <person name="Suzuki H."/>
            <person name="Kawai J."/>
            <person name="Hayashizaki Y."/>
        </authorList>
    </citation>
    <scope>NUCLEOTIDE SEQUENCE [LARGE SCALE MRNA] (ISOFORM 1)</scope>
    <source>
        <strain>C57BL/6J</strain>
        <tissue>Testis</tissue>
    </source>
</reference>
<reference key="3">
    <citation type="journal article" date="2004" name="Genome Res.">
        <title>The status, quality, and expansion of the NIH full-length cDNA project: the Mammalian Gene Collection (MGC).</title>
        <authorList>
            <consortium name="The MGC Project Team"/>
        </authorList>
    </citation>
    <scope>NUCLEOTIDE SEQUENCE [LARGE SCALE MRNA] (ISOFORMS 1 AND 2)</scope>
</reference>
<reference key="4">
    <citation type="journal article" date="2010" name="Hum. Reprod.">
        <title>Speriolin is a novel human and mouse sperm centrosome protein.</title>
        <authorList>
            <person name="Goto M."/>
            <person name="O'Brien D.A."/>
            <person name="Eddy E.M."/>
        </authorList>
    </citation>
    <scope>SUBCELLULAR LOCATION</scope>
    <scope>TISSUE SPECIFICITY</scope>
</reference>
<keyword id="KW-0025">Alternative splicing</keyword>
<keyword id="KW-0175">Coiled coil</keyword>
<keyword id="KW-0963">Cytoplasm</keyword>
<keyword id="KW-0206">Cytoskeleton</keyword>
<keyword id="KW-1185">Reference proteome</keyword>
<proteinExistence type="evidence at protein level"/>
<sequence length="480" mass="51418">MSLLTSYEGLRHQIERLVRENEELKKLVRLIRENQELKSAIKTQAGGLCISGFTGGLGEAAAGPPQHQGVFLPPASAAAKEPCSEDLGMVALAPLADMLNTPQLSPAAGSLVNPLAATLNPLLSGQIPLLQNNQFANLVPCSMSNQLTNPTTVSPGVTLASSLGLPSTGPLNSQMTSPMTVPPGTTLASSLGLTSTGSLTTSSRLVGPLAVSQSSPIMAPLAGTVAVSLSSPLLSSTATPLGVAQNVVPNPINNIGQPETPRVRRAEPTRGNFSGTSAYAGPAPTSKVNDTRGSRVMEQSRKNVVEMERKTPHRKSNKLPDNPRDTKQLVCERLVGEIAFQLDRRILSSIFPERVRLYGFTVSNIPEKIIQASLNPSNHKLDEDLCQTLTQRYVSIMNKLQSLGYNGRVHPALTEQLVNEYGILRERPELAASEGGCYTVDFLQRVLLETVHPSKLTDALLLLSCLHQLSHDDGKPMFIW</sequence>
<feature type="chain" id="PRO_0000312301" description="Speriolin">
    <location>
        <begin position="1"/>
        <end position="480"/>
    </location>
</feature>
<feature type="region of interest" description="Necessary for targeting to centrosomes">
    <location>
        <begin position="1"/>
        <end position="76"/>
    </location>
</feature>
<feature type="region of interest" description="Disordered" evidence="2">
    <location>
        <begin position="252"/>
        <end position="297"/>
    </location>
</feature>
<feature type="region of interest" description="Disordered" evidence="2">
    <location>
        <begin position="305"/>
        <end position="324"/>
    </location>
</feature>
<feature type="coiled-coil region" evidence="1">
    <location>
        <begin position="2"/>
        <end position="45"/>
    </location>
</feature>
<feature type="splice variant" id="VSP_029818" description="In isoform 2." evidence="5">
    <location>
        <begin position="1"/>
        <end position="296"/>
    </location>
</feature>
<feature type="mutagenesis site" description="Abolishes CDC20 binding; when associated with Q-314." evidence="3">
    <original>K</original>
    <variation>R</variation>
    <location>
        <position position="302"/>
    </location>
</feature>
<feature type="mutagenesis site" description="Abolishes CDC20 binding." evidence="3">
    <original>V</original>
    <variation>M</variation>
    <location>
        <position position="305"/>
    </location>
</feature>
<feature type="mutagenesis site" description="Abolishes CDC20 binding; when associated with R-302." evidence="3">
    <original>R</original>
    <variation>Q</variation>
    <location>
        <position position="314"/>
    </location>
</feature>
<feature type="mutagenesis site" description="Abolishes CDC20 binding." evidence="3">
    <original>L</original>
    <variation>P</variation>
    <location>
        <position position="469"/>
    </location>
</feature>
<feature type="sequence conflict" description="In Ref. 2; BAB24825." evidence="6" ref="2">
    <original>F</original>
    <variation>L</variation>
    <location>
        <position position="71"/>
    </location>
</feature>
<feature type="sequence conflict" description="In Ref. 1; BAD08243 and 2; BAB24825." evidence="6" ref="1 2">
    <original>R</original>
    <variation>L</variation>
    <location>
        <position position="265"/>
    </location>
</feature>
<dbReference type="EMBL" id="AB032199">
    <property type="protein sequence ID" value="BAD08243.1"/>
    <property type="molecule type" value="mRNA"/>
</dbReference>
<dbReference type="EMBL" id="AK006994">
    <property type="protein sequence ID" value="BAB24825.1"/>
    <property type="molecule type" value="mRNA"/>
</dbReference>
<dbReference type="EMBL" id="BC116725">
    <property type="protein sequence ID" value="AAI16726.1"/>
    <property type="molecule type" value="mRNA"/>
</dbReference>
<dbReference type="EMBL" id="BC118509">
    <property type="protein sequence ID" value="AAI18510.1"/>
    <property type="molecule type" value="mRNA"/>
</dbReference>
<dbReference type="CCDS" id="CCDS27564.1">
    <molecule id="Q148B6-1"/>
</dbReference>
<dbReference type="RefSeq" id="NP_083128.1">
    <property type="nucleotide sequence ID" value="NM_028852.1"/>
</dbReference>
<dbReference type="RefSeq" id="XP_017172256.1">
    <molecule id="Q148B6-2"/>
    <property type="nucleotide sequence ID" value="XM_017316767.2"/>
</dbReference>
<dbReference type="RefSeq" id="XP_017172257.1">
    <molecule id="Q148B6-2"/>
    <property type="nucleotide sequence ID" value="XM_017316768.2"/>
</dbReference>
<dbReference type="RefSeq" id="XP_017172258.1">
    <molecule id="Q148B6-2"/>
    <property type="nucleotide sequence ID" value="XM_017316769.3"/>
</dbReference>
<dbReference type="RefSeq" id="XP_030104662.1">
    <molecule id="Q148B6-2"/>
    <property type="nucleotide sequence ID" value="XM_030248802.1"/>
</dbReference>
<dbReference type="SMR" id="Q148B6"/>
<dbReference type="FunCoup" id="Q148B6">
    <property type="interactions" value="49"/>
</dbReference>
<dbReference type="STRING" id="10090.ENSMUSP00000073805"/>
<dbReference type="iPTMnet" id="Q148B6"/>
<dbReference type="PhosphoSitePlus" id="Q148B6"/>
<dbReference type="PaxDb" id="10090-ENSMUSP00000073805"/>
<dbReference type="ProteomicsDB" id="261570">
    <molecule id="Q148B6-1"/>
</dbReference>
<dbReference type="ProteomicsDB" id="261571">
    <molecule id="Q148B6-2"/>
</dbReference>
<dbReference type="DNASU" id="74281"/>
<dbReference type="GeneID" id="74281"/>
<dbReference type="KEGG" id="mmu:74281"/>
<dbReference type="UCSC" id="uc007wjm.1">
    <molecule id="Q148B6-1"/>
    <property type="organism name" value="mouse"/>
</dbReference>
<dbReference type="AGR" id="MGI:1921531"/>
<dbReference type="CTD" id="375686"/>
<dbReference type="MGI" id="MGI:1921531">
    <property type="gene designation" value="Spatc1"/>
</dbReference>
<dbReference type="eggNOG" id="ENOG502RYNF">
    <property type="taxonomic scope" value="Eukaryota"/>
</dbReference>
<dbReference type="InParanoid" id="Q148B6"/>
<dbReference type="OrthoDB" id="6114770at2759"/>
<dbReference type="PhylomeDB" id="Q148B6"/>
<dbReference type="TreeFam" id="TF329273"/>
<dbReference type="BioGRID-ORCS" id="74281">
    <property type="hits" value="0 hits in 77 CRISPR screens"/>
</dbReference>
<dbReference type="ChiTaRS" id="Spatc1">
    <property type="organism name" value="mouse"/>
</dbReference>
<dbReference type="PRO" id="PR:Q148B6"/>
<dbReference type="Proteomes" id="UP000000589">
    <property type="component" value="Unplaced"/>
</dbReference>
<dbReference type="RNAct" id="Q148B6">
    <property type="molecule type" value="protein"/>
</dbReference>
<dbReference type="GO" id="GO:0005813">
    <property type="term" value="C:centrosome"/>
    <property type="evidence" value="ECO:0000314"/>
    <property type="project" value="MGI"/>
</dbReference>
<dbReference type="GO" id="GO:0005737">
    <property type="term" value="C:cytoplasm"/>
    <property type="evidence" value="ECO:0000314"/>
    <property type="project" value="MGI"/>
</dbReference>
<dbReference type="GO" id="GO:0043015">
    <property type="term" value="F:gamma-tubulin binding"/>
    <property type="evidence" value="ECO:0000314"/>
    <property type="project" value="MGI"/>
</dbReference>
<dbReference type="InterPro" id="IPR026715">
    <property type="entry name" value="SPATC1"/>
</dbReference>
<dbReference type="InterPro" id="IPR029384">
    <property type="entry name" value="Speriolin_C"/>
</dbReference>
<dbReference type="InterPro" id="IPR029385">
    <property type="entry name" value="Speriolin_N"/>
</dbReference>
<dbReference type="PANTHER" id="PTHR22192">
    <property type="entry name" value="SPERIOLIN"/>
    <property type="match status" value="1"/>
</dbReference>
<dbReference type="PANTHER" id="PTHR22192:SF16">
    <property type="entry name" value="SPERIOLIN"/>
    <property type="match status" value="1"/>
</dbReference>
<dbReference type="Pfam" id="PF15059">
    <property type="entry name" value="Speriolin_C"/>
    <property type="match status" value="1"/>
</dbReference>
<dbReference type="Pfam" id="PF15058">
    <property type="entry name" value="Speriolin_N"/>
    <property type="match status" value="2"/>
</dbReference>
<protein>
    <recommendedName>
        <fullName>Speriolin</fullName>
    </recommendedName>
    <alternativeName>
        <fullName>Spermatogenesis and centriole-associated protein 1</fullName>
    </alternativeName>
    <alternativeName>
        <fullName>Spermatogenic cell-specific Cdc20-binding protein</fullName>
    </alternativeName>
</protein>
<accession>Q148B6</accession>
<accession>Q14AS6</accession>
<accession>Q76MV2</accession>
<accession>Q9D9F0</accession>
<name>SPERI_MOUSE</name>